<comment type="function">
    <text evidence="1">Catalyzes the reversible reaction in which hydroxymethyl group from 5,10-methylenetetrahydrofolate is transferred onto alpha-ketoisovalerate to form ketopantoate.</text>
</comment>
<comment type="catalytic activity">
    <reaction evidence="1">
        <text>3-methyl-2-oxobutanoate + (6R)-5,10-methylene-5,6,7,8-tetrahydrofolate + H2O = 2-dehydropantoate + (6S)-5,6,7,8-tetrahydrofolate</text>
        <dbReference type="Rhea" id="RHEA:11824"/>
        <dbReference type="ChEBI" id="CHEBI:11561"/>
        <dbReference type="ChEBI" id="CHEBI:11851"/>
        <dbReference type="ChEBI" id="CHEBI:15377"/>
        <dbReference type="ChEBI" id="CHEBI:15636"/>
        <dbReference type="ChEBI" id="CHEBI:57453"/>
        <dbReference type="EC" id="2.1.2.11"/>
    </reaction>
</comment>
<comment type="cofactor">
    <cofactor evidence="1">
        <name>Mg(2+)</name>
        <dbReference type="ChEBI" id="CHEBI:18420"/>
    </cofactor>
    <text evidence="1">Binds 1 Mg(2+) ion per subunit.</text>
</comment>
<comment type="pathway">
    <text evidence="1">Cofactor biosynthesis; (R)-pantothenate biosynthesis; (R)-pantoate from 3-methyl-2-oxobutanoate: step 1/2.</text>
</comment>
<comment type="subunit">
    <text evidence="1">Homodecamer; pentamer of dimers.</text>
</comment>
<comment type="subcellular location">
    <subcellularLocation>
        <location evidence="1">Cytoplasm</location>
    </subcellularLocation>
</comment>
<comment type="similarity">
    <text evidence="1">Belongs to the PanB family.</text>
</comment>
<organism>
    <name type="scientific">Nitrobacter winogradskyi (strain ATCC 25391 / DSM 10237 / CIP 104748 / NCIMB 11846 / Nb-255)</name>
    <dbReference type="NCBI Taxonomy" id="323098"/>
    <lineage>
        <taxon>Bacteria</taxon>
        <taxon>Pseudomonadati</taxon>
        <taxon>Pseudomonadota</taxon>
        <taxon>Alphaproteobacteria</taxon>
        <taxon>Hyphomicrobiales</taxon>
        <taxon>Nitrobacteraceae</taxon>
        <taxon>Nitrobacter</taxon>
    </lineage>
</organism>
<keyword id="KW-0963">Cytoplasm</keyword>
<keyword id="KW-0460">Magnesium</keyword>
<keyword id="KW-0479">Metal-binding</keyword>
<keyword id="KW-0566">Pantothenate biosynthesis</keyword>
<keyword id="KW-1185">Reference proteome</keyword>
<keyword id="KW-0808">Transferase</keyword>
<protein>
    <recommendedName>
        <fullName evidence="1">3-methyl-2-oxobutanoate hydroxymethyltransferase</fullName>
        <ecNumber evidence="1">2.1.2.11</ecNumber>
    </recommendedName>
    <alternativeName>
        <fullName evidence="1">Ketopantoate hydroxymethyltransferase</fullName>
        <shortName evidence="1">KPHMT</shortName>
    </alternativeName>
</protein>
<reference key="1">
    <citation type="journal article" date="2006" name="Appl. Environ. Microbiol.">
        <title>Genome sequence of the chemolithoautotrophic nitrite-oxidizing bacterium Nitrobacter winogradskyi Nb-255.</title>
        <authorList>
            <person name="Starkenburg S.R."/>
            <person name="Chain P.S.G."/>
            <person name="Sayavedra-Soto L.A."/>
            <person name="Hauser L."/>
            <person name="Land M.L."/>
            <person name="Larimer F.W."/>
            <person name="Malfatti S.A."/>
            <person name="Klotz M.G."/>
            <person name="Bottomley P.J."/>
            <person name="Arp D.J."/>
            <person name="Hickey W.J."/>
        </authorList>
    </citation>
    <scope>NUCLEOTIDE SEQUENCE [LARGE SCALE GENOMIC DNA]</scope>
    <source>
        <strain>ATCC 25391 / DSM 10237 / CIP 104748 / NCIMB 11846 / Nb-255</strain>
    </source>
</reference>
<accession>Q3SR08</accession>
<name>PANB_NITWN</name>
<gene>
    <name evidence="1" type="primary">panB</name>
    <name type="ordered locus">Nwi_2024</name>
</gene>
<feature type="chain" id="PRO_0000297308" description="3-methyl-2-oxobutanoate hydroxymethyltransferase">
    <location>
        <begin position="1"/>
        <end position="274"/>
    </location>
</feature>
<feature type="active site" description="Proton acceptor" evidence="1">
    <location>
        <position position="187"/>
    </location>
</feature>
<feature type="binding site" evidence="1">
    <location>
        <begin position="49"/>
        <end position="50"/>
    </location>
    <ligand>
        <name>3-methyl-2-oxobutanoate</name>
        <dbReference type="ChEBI" id="CHEBI:11851"/>
    </ligand>
</feature>
<feature type="binding site" evidence="1">
    <location>
        <position position="49"/>
    </location>
    <ligand>
        <name>Mg(2+)</name>
        <dbReference type="ChEBI" id="CHEBI:18420"/>
    </ligand>
</feature>
<feature type="binding site" evidence="1">
    <location>
        <position position="88"/>
    </location>
    <ligand>
        <name>3-methyl-2-oxobutanoate</name>
        <dbReference type="ChEBI" id="CHEBI:11851"/>
    </ligand>
</feature>
<feature type="binding site" evidence="1">
    <location>
        <position position="88"/>
    </location>
    <ligand>
        <name>Mg(2+)</name>
        <dbReference type="ChEBI" id="CHEBI:18420"/>
    </ligand>
</feature>
<feature type="binding site" evidence="1">
    <location>
        <position position="118"/>
    </location>
    <ligand>
        <name>3-methyl-2-oxobutanoate</name>
        <dbReference type="ChEBI" id="CHEBI:11851"/>
    </ligand>
</feature>
<feature type="binding site" evidence="1">
    <location>
        <position position="120"/>
    </location>
    <ligand>
        <name>Mg(2+)</name>
        <dbReference type="ChEBI" id="CHEBI:18420"/>
    </ligand>
</feature>
<proteinExistence type="inferred from homology"/>
<sequence>MSVQSAIRRRTAPDIRARKNGDPIVMLTSYHAHTAALVDRYCDVILVGDSLGNVMHGFETTVPVTLDMMILQGRAVMRGSQQALVVVDMPFGSYEASKEQAFHSAARLLKETLCGAVKLEGGVKMAETIAFLSARGIPVMGHVGLTPQSINTLGSFRAQGREEGTWQPIEDDARAVAEAGAFSMVIEAVAEPLARRITETVAIPTIGIGASPACDGQVLVLEDMLGLSPRAPKFVRRYGELGPMIEAAIEGYARDVRSRAFPGPEHVYAMKPKS</sequence>
<evidence type="ECO:0000255" key="1">
    <source>
        <dbReference type="HAMAP-Rule" id="MF_00156"/>
    </source>
</evidence>
<dbReference type="EC" id="2.1.2.11" evidence="1"/>
<dbReference type="EMBL" id="CP000115">
    <property type="protein sequence ID" value="ABA05283.1"/>
    <property type="molecule type" value="Genomic_DNA"/>
</dbReference>
<dbReference type="RefSeq" id="WP_011315269.1">
    <property type="nucleotide sequence ID" value="NC_007406.1"/>
</dbReference>
<dbReference type="SMR" id="Q3SR08"/>
<dbReference type="STRING" id="323098.Nwi_2024"/>
<dbReference type="KEGG" id="nwi:Nwi_2024"/>
<dbReference type="eggNOG" id="COG0413">
    <property type="taxonomic scope" value="Bacteria"/>
</dbReference>
<dbReference type="HOGENOM" id="CLU_036645_1_0_5"/>
<dbReference type="OrthoDB" id="9781789at2"/>
<dbReference type="UniPathway" id="UPA00028">
    <property type="reaction ID" value="UER00003"/>
</dbReference>
<dbReference type="Proteomes" id="UP000002531">
    <property type="component" value="Chromosome"/>
</dbReference>
<dbReference type="GO" id="GO:0005737">
    <property type="term" value="C:cytoplasm"/>
    <property type="evidence" value="ECO:0007669"/>
    <property type="project" value="UniProtKB-SubCell"/>
</dbReference>
<dbReference type="GO" id="GO:0003864">
    <property type="term" value="F:3-methyl-2-oxobutanoate hydroxymethyltransferase activity"/>
    <property type="evidence" value="ECO:0007669"/>
    <property type="project" value="UniProtKB-UniRule"/>
</dbReference>
<dbReference type="GO" id="GO:0000287">
    <property type="term" value="F:magnesium ion binding"/>
    <property type="evidence" value="ECO:0007669"/>
    <property type="project" value="TreeGrafter"/>
</dbReference>
<dbReference type="GO" id="GO:0015940">
    <property type="term" value="P:pantothenate biosynthetic process"/>
    <property type="evidence" value="ECO:0007669"/>
    <property type="project" value="UniProtKB-UniRule"/>
</dbReference>
<dbReference type="CDD" id="cd06557">
    <property type="entry name" value="KPHMT-like"/>
    <property type="match status" value="1"/>
</dbReference>
<dbReference type="FunFam" id="3.20.20.60:FF:000003">
    <property type="entry name" value="3-methyl-2-oxobutanoate hydroxymethyltransferase"/>
    <property type="match status" value="1"/>
</dbReference>
<dbReference type="Gene3D" id="3.20.20.60">
    <property type="entry name" value="Phosphoenolpyruvate-binding domains"/>
    <property type="match status" value="1"/>
</dbReference>
<dbReference type="HAMAP" id="MF_00156">
    <property type="entry name" value="PanB"/>
    <property type="match status" value="1"/>
</dbReference>
<dbReference type="InterPro" id="IPR003700">
    <property type="entry name" value="Pantoate_hydroxy_MeTrfase"/>
</dbReference>
<dbReference type="InterPro" id="IPR015813">
    <property type="entry name" value="Pyrv/PenolPyrv_kinase-like_dom"/>
</dbReference>
<dbReference type="InterPro" id="IPR040442">
    <property type="entry name" value="Pyrv_kinase-like_dom_sf"/>
</dbReference>
<dbReference type="NCBIfam" id="TIGR00222">
    <property type="entry name" value="panB"/>
    <property type="match status" value="1"/>
</dbReference>
<dbReference type="NCBIfam" id="NF001452">
    <property type="entry name" value="PRK00311.1"/>
    <property type="match status" value="1"/>
</dbReference>
<dbReference type="PANTHER" id="PTHR20881">
    <property type="entry name" value="3-METHYL-2-OXOBUTANOATE HYDROXYMETHYLTRANSFERASE"/>
    <property type="match status" value="1"/>
</dbReference>
<dbReference type="PANTHER" id="PTHR20881:SF0">
    <property type="entry name" value="3-METHYL-2-OXOBUTANOATE HYDROXYMETHYLTRANSFERASE"/>
    <property type="match status" value="1"/>
</dbReference>
<dbReference type="Pfam" id="PF02548">
    <property type="entry name" value="Pantoate_transf"/>
    <property type="match status" value="1"/>
</dbReference>
<dbReference type="PIRSF" id="PIRSF000388">
    <property type="entry name" value="Pantoate_hydroxy_MeTrfase"/>
    <property type="match status" value="1"/>
</dbReference>
<dbReference type="SUPFAM" id="SSF51621">
    <property type="entry name" value="Phosphoenolpyruvate/pyruvate domain"/>
    <property type="match status" value="1"/>
</dbReference>